<comment type="function">
    <text evidence="1 4">Negatively regulates TNF-alpha-induced pro-inflammatory response in endothelial cells (ECs) via inhibition of TNF-alpha-induced NF-kappaB activation in ECs (PubMed:25193116). Positively regulates lipid accumulation in adipose cells (By similarity).</text>
</comment>
<comment type="subunit">
    <text evidence="1">Homodimer.</text>
</comment>
<comment type="subcellular location">
    <subcellularLocation>
        <location evidence="1">Secreted</location>
    </subcellularLocation>
</comment>
<comment type="alternative products">
    <event type="alternative splicing"/>
    <isoform>
        <id>Q9BQI4-1</id>
        <name>1</name>
        <sequence type="displayed"/>
    </isoform>
    <isoform>
        <id>Q9BQI4-2</id>
        <name>2</name>
        <sequence type="described" ref="VSP_054551"/>
    </isoform>
</comment>
<comment type="tissue specificity">
    <text evidence="3">Expressed in umbilical vein endothelial cells (HUVEC), and at lower levels in aortic smooth muscle cells (HASMC).</text>
</comment>
<comment type="induction">
    <text evidence="3">Up-regulated by pioglitazone and down-regulated by TNF in HUVEC.</text>
</comment>
<reference key="1">
    <citation type="journal article" date="2001" name="Genome Res.">
        <title>Towards a catalog of human genes and proteins: sequencing and analysis of 500 novel complete protein coding human cDNAs.</title>
        <authorList>
            <person name="Wiemann S."/>
            <person name="Weil B."/>
            <person name="Wellenreuther R."/>
            <person name="Gassenhuber J."/>
            <person name="Glassl S."/>
            <person name="Ansorge W."/>
            <person name="Boecher M."/>
            <person name="Bloecker H."/>
            <person name="Bauersachs S."/>
            <person name="Blum H."/>
            <person name="Lauber J."/>
            <person name="Duesterhoeft A."/>
            <person name="Beyer A."/>
            <person name="Koehrer K."/>
            <person name="Strack N."/>
            <person name="Mewes H.-W."/>
            <person name="Ottenwaelder B."/>
            <person name="Obermaier B."/>
            <person name="Tampe J."/>
            <person name="Heubner D."/>
            <person name="Wambutt R."/>
            <person name="Korn B."/>
            <person name="Klein M."/>
            <person name="Poustka A."/>
        </authorList>
    </citation>
    <scope>NUCLEOTIDE SEQUENCE [LARGE SCALE MRNA] (ISOFORM 1)</scope>
    <source>
        <tissue>Amygdala</tissue>
    </source>
</reference>
<reference key="2">
    <citation type="journal article" date="2004" name="Nat. Genet.">
        <title>Complete sequencing and characterization of 21,243 full-length human cDNAs.</title>
        <authorList>
            <person name="Ota T."/>
            <person name="Suzuki Y."/>
            <person name="Nishikawa T."/>
            <person name="Otsuki T."/>
            <person name="Sugiyama T."/>
            <person name="Irie R."/>
            <person name="Wakamatsu A."/>
            <person name="Hayashi K."/>
            <person name="Sato H."/>
            <person name="Nagai K."/>
            <person name="Kimura K."/>
            <person name="Makita H."/>
            <person name="Sekine M."/>
            <person name="Obayashi M."/>
            <person name="Nishi T."/>
            <person name="Shibahara T."/>
            <person name="Tanaka T."/>
            <person name="Ishii S."/>
            <person name="Yamamoto J."/>
            <person name="Saito K."/>
            <person name="Kawai Y."/>
            <person name="Isono Y."/>
            <person name="Nakamura Y."/>
            <person name="Nagahari K."/>
            <person name="Murakami K."/>
            <person name="Yasuda T."/>
            <person name="Iwayanagi T."/>
            <person name="Wagatsuma M."/>
            <person name="Shiratori A."/>
            <person name="Sudo H."/>
            <person name="Hosoiri T."/>
            <person name="Kaku Y."/>
            <person name="Kodaira H."/>
            <person name="Kondo H."/>
            <person name="Sugawara M."/>
            <person name="Takahashi M."/>
            <person name="Kanda K."/>
            <person name="Yokoi T."/>
            <person name="Furuya T."/>
            <person name="Kikkawa E."/>
            <person name="Omura Y."/>
            <person name="Abe K."/>
            <person name="Kamihara K."/>
            <person name="Katsuta N."/>
            <person name="Sato K."/>
            <person name="Tanikawa M."/>
            <person name="Yamazaki M."/>
            <person name="Ninomiya K."/>
            <person name="Ishibashi T."/>
            <person name="Yamashita H."/>
            <person name="Murakawa K."/>
            <person name="Fujimori K."/>
            <person name="Tanai H."/>
            <person name="Kimata M."/>
            <person name="Watanabe M."/>
            <person name="Hiraoka S."/>
            <person name="Chiba Y."/>
            <person name="Ishida S."/>
            <person name="Ono Y."/>
            <person name="Takiguchi S."/>
            <person name="Watanabe S."/>
            <person name="Yosida M."/>
            <person name="Hotuta T."/>
            <person name="Kusano J."/>
            <person name="Kanehori K."/>
            <person name="Takahashi-Fujii A."/>
            <person name="Hara H."/>
            <person name="Tanase T.-O."/>
            <person name="Nomura Y."/>
            <person name="Togiya S."/>
            <person name="Komai F."/>
            <person name="Hara R."/>
            <person name="Takeuchi K."/>
            <person name="Arita M."/>
            <person name="Imose N."/>
            <person name="Musashino K."/>
            <person name="Yuuki H."/>
            <person name="Oshima A."/>
            <person name="Sasaki N."/>
            <person name="Aotsuka S."/>
            <person name="Yoshikawa Y."/>
            <person name="Matsunawa H."/>
            <person name="Ichihara T."/>
            <person name="Shiohata N."/>
            <person name="Sano S."/>
            <person name="Moriya S."/>
            <person name="Momiyama H."/>
            <person name="Satoh N."/>
            <person name="Takami S."/>
            <person name="Terashima Y."/>
            <person name="Suzuki O."/>
            <person name="Nakagawa S."/>
            <person name="Senoh A."/>
            <person name="Mizoguchi H."/>
            <person name="Goto Y."/>
            <person name="Shimizu F."/>
            <person name="Wakebe H."/>
            <person name="Hishigaki H."/>
            <person name="Watanabe T."/>
            <person name="Sugiyama A."/>
            <person name="Takemoto M."/>
            <person name="Kawakami B."/>
            <person name="Yamazaki M."/>
            <person name="Watanabe K."/>
            <person name="Kumagai A."/>
            <person name="Itakura S."/>
            <person name="Fukuzumi Y."/>
            <person name="Fujimori Y."/>
            <person name="Komiyama M."/>
            <person name="Tashiro H."/>
            <person name="Tanigami A."/>
            <person name="Fujiwara T."/>
            <person name="Ono T."/>
            <person name="Yamada K."/>
            <person name="Fujii Y."/>
            <person name="Ozaki K."/>
            <person name="Hirao M."/>
            <person name="Ohmori Y."/>
            <person name="Kawabata A."/>
            <person name="Hikiji T."/>
            <person name="Kobatake N."/>
            <person name="Inagaki H."/>
            <person name="Ikema Y."/>
            <person name="Okamoto S."/>
            <person name="Okitani R."/>
            <person name="Kawakami T."/>
            <person name="Noguchi S."/>
            <person name="Itoh T."/>
            <person name="Shigeta K."/>
            <person name="Senba T."/>
            <person name="Matsumura K."/>
            <person name="Nakajima Y."/>
            <person name="Mizuno T."/>
            <person name="Morinaga M."/>
            <person name="Sasaki M."/>
            <person name="Togashi T."/>
            <person name="Oyama M."/>
            <person name="Hata H."/>
            <person name="Watanabe M."/>
            <person name="Komatsu T."/>
            <person name="Mizushima-Sugano J."/>
            <person name="Satoh T."/>
            <person name="Shirai Y."/>
            <person name="Takahashi Y."/>
            <person name="Nakagawa K."/>
            <person name="Okumura K."/>
            <person name="Nagase T."/>
            <person name="Nomura N."/>
            <person name="Kikuchi H."/>
            <person name="Masuho Y."/>
            <person name="Yamashita R."/>
            <person name="Nakai K."/>
            <person name="Yada T."/>
            <person name="Nakamura Y."/>
            <person name="Ohara O."/>
            <person name="Isogai T."/>
            <person name="Sugano S."/>
        </authorList>
    </citation>
    <scope>NUCLEOTIDE SEQUENCE [LARGE SCALE MRNA] (ISOFORM 2)</scope>
    <source>
        <tissue>Brain</tissue>
    </source>
</reference>
<reference key="3">
    <citation type="journal article" date="2004" name="Nature">
        <title>The DNA sequence and comparative analysis of human chromosome 10.</title>
        <authorList>
            <person name="Deloukas P."/>
            <person name="Earthrowl M.E."/>
            <person name="Grafham D.V."/>
            <person name="Rubenfield M."/>
            <person name="French L."/>
            <person name="Steward C.A."/>
            <person name="Sims S.K."/>
            <person name="Jones M.C."/>
            <person name="Searle S."/>
            <person name="Scott C."/>
            <person name="Howe K."/>
            <person name="Hunt S.E."/>
            <person name="Andrews T.D."/>
            <person name="Gilbert J.G.R."/>
            <person name="Swarbreck D."/>
            <person name="Ashurst J.L."/>
            <person name="Taylor A."/>
            <person name="Battles J."/>
            <person name="Bird C.P."/>
            <person name="Ainscough R."/>
            <person name="Almeida J.P."/>
            <person name="Ashwell R.I.S."/>
            <person name="Ambrose K.D."/>
            <person name="Babbage A.K."/>
            <person name="Bagguley C.L."/>
            <person name="Bailey J."/>
            <person name="Banerjee R."/>
            <person name="Bates K."/>
            <person name="Beasley H."/>
            <person name="Bray-Allen S."/>
            <person name="Brown A.J."/>
            <person name="Brown J.Y."/>
            <person name="Burford D.C."/>
            <person name="Burrill W."/>
            <person name="Burton J."/>
            <person name="Cahill P."/>
            <person name="Camire D."/>
            <person name="Carter N.P."/>
            <person name="Chapman J.C."/>
            <person name="Clark S.Y."/>
            <person name="Clarke G."/>
            <person name="Clee C.M."/>
            <person name="Clegg S."/>
            <person name="Corby N."/>
            <person name="Coulson A."/>
            <person name="Dhami P."/>
            <person name="Dutta I."/>
            <person name="Dunn M."/>
            <person name="Faulkner L."/>
            <person name="Frankish A."/>
            <person name="Frankland J.A."/>
            <person name="Garner P."/>
            <person name="Garnett J."/>
            <person name="Gribble S."/>
            <person name="Griffiths C."/>
            <person name="Grocock R."/>
            <person name="Gustafson E."/>
            <person name="Hammond S."/>
            <person name="Harley J.L."/>
            <person name="Hart E."/>
            <person name="Heath P.D."/>
            <person name="Ho T.P."/>
            <person name="Hopkins B."/>
            <person name="Horne J."/>
            <person name="Howden P.J."/>
            <person name="Huckle E."/>
            <person name="Hynds C."/>
            <person name="Johnson C."/>
            <person name="Johnson D."/>
            <person name="Kana A."/>
            <person name="Kay M."/>
            <person name="Kimberley A.M."/>
            <person name="Kershaw J.K."/>
            <person name="Kokkinaki M."/>
            <person name="Laird G.K."/>
            <person name="Lawlor S."/>
            <person name="Lee H.M."/>
            <person name="Leongamornlert D.A."/>
            <person name="Laird G."/>
            <person name="Lloyd C."/>
            <person name="Lloyd D.M."/>
            <person name="Loveland J."/>
            <person name="Lovell J."/>
            <person name="McLaren S."/>
            <person name="McLay K.E."/>
            <person name="McMurray A."/>
            <person name="Mashreghi-Mohammadi M."/>
            <person name="Matthews L."/>
            <person name="Milne S."/>
            <person name="Nickerson T."/>
            <person name="Nguyen M."/>
            <person name="Overton-Larty E."/>
            <person name="Palmer S.A."/>
            <person name="Pearce A.V."/>
            <person name="Peck A.I."/>
            <person name="Pelan S."/>
            <person name="Phillimore B."/>
            <person name="Porter K."/>
            <person name="Rice C.M."/>
            <person name="Rogosin A."/>
            <person name="Ross M.T."/>
            <person name="Sarafidou T."/>
            <person name="Sehra H.K."/>
            <person name="Shownkeen R."/>
            <person name="Skuce C.D."/>
            <person name="Smith M."/>
            <person name="Standring L."/>
            <person name="Sycamore N."/>
            <person name="Tester J."/>
            <person name="Thorpe A."/>
            <person name="Torcasso W."/>
            <person name="Tracey A."/>
            <person name="Tromans A."/>
            <person name="Tsolas J."/>
            <person name="Wall M."/>
            <person name="Walsh J."/>
            <person name="Wang H."/>
            <person name="Weinstock K."/>
            <person name="West A.P."/>
            <person name="Willey D.L."/>
            <person name="Whitehead S.L."/>
            <person name="Wilming L."/>
            <person name="Wray P.W."/>
            <person name="Young L."/>
            <person name="Chen Y."/>
            <person name="Lovering R.C."/>
            <person name="Moschonas N.K."/>
            <person name="Siebert R."/>
            <person name="Fechtel K."/>
            <person name="Bentley D."/>
            <person name="Durbin R.M."/>
            <person name="Hubbard T."/>
            <person name="Doucette-Stamm L."/>
            <person name="Beck S."/>
            <person name="Smith D.R."/>
            <person name="Rogers J."/>
        </authorList>
    </citation>
    <scope>NUCLEOTIDE SEQUENCE [LARGE SCALE GENOMIC DNA]</scope>
</reference>
<reference key="4">
    <citation type="journal article" date="2004" name="Genome Res.">
        <title>The status, quality, and expansion of the NIH full-length cDNA project: the Mammalian Gene Collection (MGC).</title>
        <authorList>
            <consortium name="The MGC Project Team"/>
        </authorList>
    </citation>
    <scope>NUCLEOTIDE SEQUENCE [LARGE SCALE MRNA] (ISOFORM 1)</scope>
    <source>
        <tissue>Spleen</tissue>
    </source>
</reference>
<reference key="5">
    <citation type="journal article" date="2010" name="Biochem. Biophys. Res. Commun.">
        <title>Identification of a new secretory factor, CCDC3/Favine, in adipocytes and endothelial cells.</title>
        <authorList>
            <person name="Kobayashi S."/>
            <person name="Fukuhara A."/>
            <person name="Taguchi T."/>
            <person name="Matsuda M."/>
            <person name="Tochino Y."/>
            <person name="Otsuki M."/>
            <person name="Shimomura I."/>
        </authorList>
    </citation>
    <scope>TISSUE SPECIFICITY</scope>
    <scope>INDUCTION BY PIOGLITAZONE</scope>
</reference>
<reference key="6">
    <citation type="journal article" date="2014" name="Cell. Signal.">
        <title>Coiled-coil domain containing 3 (CCDC3) represses tumor necrosis factor-alpha/nuclear factor kappaB-induced endothelial inflammation.</title>
        <authorList>
            <person name="Azad A.K."/>
            <person name="Chakrabarti S."/>
            <person name="Xu Z."/>
            <person name="Davidge S.T."/>
            <person name="Fu Y."/>
        </authorList>
    </citation>
    <scope>FUNCTION</scope>
</reference>
<feature type="signal peptide" evidence="1">
    <location>
        <begin position="1"/>
        <end position="21"/>
    </location>
</feature>
<feature type="chain" id="PRO_0000020862" description="Coiled-coil domain-containing protein 3">
    <location>
        <begin position="22"/>
        <end position="270"/>
    </location>
</feature>
<feature type="coiled-coil region" evidence="2">
    <location>
        <begin position="188"/>
        <end position="251"/>
    </location>
</feature>
<feature type="glycosylation site" description="N-linked (GlcNAc...) asparagine" evidence="2">
    <location>
        <position position="100"/>
    </location>
</feature>
<feature type="splice variant" id="VSP_054551" description="In isoform 2." evidence="5">
    <location>
        <begin position="1"/>
        <end position="125"/>
    </location>
</feature>
<accession>Q9BQI4</accession>
<accession>Q5VYV8</accession>
<accession>Q5VYV9</accession>
<sequence length="270" mass="30731">MLRQLLLAALCLAGPPAPARACQLPSEWRPLSEGCRAELAETIVYARVLALHPEAPGLYNHLPWQYHAGQGGLFYSAEVEMLCDQAWGSMLEVPAGSRLNLTGLGYFSCHSHTVVQDYSYFFFLRMDENYNLLPHGVNFQDAIFPDTQENRRMFSSLFQFSNCSQGQQLATFSSDWEIQEDSRLMCSSVQKALFEEEDHVKKLQQKVATLEKRNRQLRERVKKVKRSLRQARKKGRHLELANQKLSEKLAAGALPHINARGPVRPPYLRG</sequence>
<gene>
    <name type="primary">CCDC3</name>
</gene>
<protein>
    <recommendedName>
        <fullName>Coiled-coil domain-containing protein 3</fullName>
    </recommendedName>
    <alternativeName>
        <fullName>Fat/vessel-derived secretory protein</fullName>
        <shortName>Favine</shortName>
    </alternativeName>
</protein>
<proteinExistence type="evidence at protein level"/>
<keyword id="KW-0025">Alternative splicing</keyword>
<keyword id="KW-0175">Coiled coil</keyword>
<keyword id="KW-0325">Glycoprotein</keyword>
<keyword id="KW-1267">Proteomics identification</keyword>
<keyword id="KW-1185">Reference proteome</keyword>
<keyword id="KW-0964">Secreted</keyword>
<keyword id="KW-0732">Signal</keyword>
<name>CCDC3_HUMAN</name>
<organism>
    <name type="scientific">Homo sapiens</name>
    <name type="common">Human</name>
    <dbReference type="NCBI Taxonomy" id="9606"/>
    <lineage>
        <taxon>Eukaryota</taxon>
        <taxon>Metazoa</taxon>
        <taxon>Chordata</taxon>
        <taxon>Craniata</taxon>
        <taxon>Vertebrata</taxon>
        <taxon>Euteleostomi</taxon>
        <taxon>Mammalia</taxon>
        <taxon>Eutheria</taxon>
        <taxon>Euarchontoglires</taxon>
        <taxon>Primates</taxon>
        <taxon>Haplorrhini</taxon>
        <taxon>Catarrhini</taxon>
        <taxon>Hominidae</taxon>
        <taxon>Homo</taxon>
    </lineage>
</organism>
<evidence type="ECO:0000250" key="1">
    <source>
        <dbReference type="UniProtKB" id="Q9D6Y1"/>
    </source>
</evidence>
<evidence type="ECO:0000255" key="2"/>
<evidence type="ECO:0000269" key="3">
    <source>
    </source>
</evidence>
<evidence type="ECO:0000269" key="4">
    <source>
    </source>
</evidence>
<evidence type="ECO:0000303" key="5">
    <source>
    </source>
</evidence>
<dbReference type="EMBL" id="AL136562">
    <property type="protein sequence ID" value="CAB66497.1"/>
    <property type="molecule type" value="mRNA"/>
</dbReference>
<dbReference type="EMBL" id="AK095792">
    <property type="protein sequence ID" value="BAG53129.1"/>
    <property type="molecule type" value="mRNA"/>
</dbReference>
<dbReference type="EMBL" id="AL355355">
    <property type="status" value="NOT_ANNOTATED_CDS"/>
    <property type="molecule type" value="Genomic_DNA"/>
</dbReference>
<dbReference type="EMBL" id="AL353586">
    <property type="status" value="NOT_ANNOTATED_CDS"/>
    <property type="molecule type" value="Genomic_DNA"/>
</dbReference>
<dbReference type="EMBL" id="AL596124">
    <property type="status" value="NOT_ANNOTATED_CDS"/>
    <property type="molecule type" value="Genomic_DNA"/>
</dbReference>
<dbReference type="EMBL" id="BC051334">
    <property type="protein sequence ID" value="AAH51334.1"/>
    <property type="molecule type" value="mRNA"/>
</dbReference>
<dbReference type="CCDS" id="CCDS60484.1">
    <molecule id="Q9BQI4-2"/>
</dbReference>
<dbReference type="CCDS" id="CCDS7093.1">
    <molecule id="Q9BQI4-1"/>
</dbReference>
<dbReference type="RefSeq" id="NP_001269587.1">
    <molecule id="Q9BQI4-2"/>
    <property type="nucleotide sequence ID" value="NM_001282658.2"/>
</dbReference>
<dbReference type="RefSeq" id="NP_113643.1">
    <molecule id="Q9BQI4-1"/>
    <property type="nucleotide sequence ID" value="NM_031455.4"/>
</dbReference>
<dbReference type="SMR" id="Q9BQI4"/>
<dbReference type="BioGRID" id="123707">
    <property type="interactions" value="4"/>
</dbReference>
<dbReference type="FunCoup" id="Q9BQI4">
    <property type="interactions" value="113"/>
</dbReference>
<dbReference type="STRING" id="9606.ENSP00000368102"/>
<dbReference type="GlyCosmos" id="Q9BQI4">
    <property type="glycosylation" value="1 site, No reported glycans"/>
</dbReference>
<dbReference type="GlyGen" id="Q9BQI4">
    <property type="glycosylation" value="1 site"/>
</dbReference>
<dbReference type="PhosphoSitePlus" id="Q9BQI4"/>
<dbReference type="BioMuta" id="CCDC3"/>
<dbReference type="DMDM" id="50400629"/>
<dbReference type="MassIVE" id="Q9BQI4"/>
<dbReference type="PaxDb" id="9606-ENSP00000368102"/>
<dbReference type="PeptideAtlas" id="Q9BQI4"/>
<dbReference type="ProteomicsDB" id="65653"/>
<dbReference type="ProteomicsDB" id="78684">
    <molecule id="Q9BQI4-1"/>
</dbReference>
<dbReference type="Antibodypedia" id="55471">
    <property type="antibodies" value="103 antibodies from 23 providers"/>
</dbReference>
<dbReference type="DNASU" id="83643"/>
<dbReference type="Ensembl" id="ENST00000378825.5">
    <molecule id="Q9BQI4-1"/>
    <property type="protein sequence ID" value="ENSP00000368102.3"/>
    <property type="gene ID" value="ENSG00000151468.11"/>
</dbReference>
<dbReference type="Ensembl" id="ENST00000378839.1">
    <molecule id="Q9BQI4-2"/>
    <property type="protein sequence ID" value="ENSP00000368116.1"/>
    <property type="gene ID" value="ENSG00000151468.11"/>
</dbReference>
<dbReference type="GeneID" id="83643"/>
<dbReference type="KEGG" id="hsa:83643"/>
<dbReference type="MANE-Select" id="ENST00000378825.5">
    <property type="protein sequence ID" value="ENSP00000368102.3"/>
    <property type="RefSeq nucleotide sequence ID" value="NM_031455.4"/>
    <property type="RefSeq protein sequence ID" value="NP_113643.1"/>
</dbReference>
<dbReference type="UCSC" id="uc001ilq.2">
    <molecule id="Q9BQI4-1"/>
    <property type="organism name" value="human"/>
</dbReference>
<dbReference type="AGR" id="HGNC:23813"/>
<dbReference type="CTD" id="83643"/>
<dbReference type="DisGeNET" id="83643"/>
<dbReference type="GeneCards" id="CCDC3"/>
<dbReference type="HGNC" id="HGNC:23813">
    <property type="gene designation" value="CCDC3"/>
</dbReference>
<dbReference type="HPA" id="ENSG00000151468">
    <property type="expression patterns" value="Tissue enhanced (skin)"/>
</dbReference>
<dbReference type="MIM" id="620579">
    <property type="type" value="gene"/>
</dbReference>
<dbReference type="neXtProt" id="NX_Q9BQI4"/>
<dbReference type="OpenTargets" id="ENSG00000151468"/>
<dbReference type="PharmGKB" id="PA134863738"/>
<dbReference type="VEuPathDB" id="HostDB:ENSG00000151468"/>
<dbReference type="eggNOG" id="ENOG502QPN3">
    <property type="taxonomic scope" value="Eukaryota"/>
</dbReference>
<dbReference type="GeneTree" id="ENSGT00390000014429"/>
<dbReference type="HOGENOM" id="CLU_085750_1_0_1"/>
<dbReference type="InParanoid" id="Q9BQI4"/>
<dbReference type="OMA" id="WRPLSDG"/>
<dbReference type="OrthoDB" id="9924766at2759"/>
<dbReference type="PAN-GO" id="Q9BQI4">
    <property type="GO annotations" value="2 GO annotations based on evolutionary models"/>
</dbReference>
<dbReference type="PhylomeDB" id="Q9BQI4"/>
<dbReference type="TreeFam" id="TF331410"/>
<dbReference type="PathwayCommons" id="Q9BQI4"/>
<dbReference type="BioGRID-ORCS" id="83643">
    <property type="hits" value="13 hits in 1165 CRISPR screens"/>
</dbReference>
<dbReference type="ChiTaRS" id="CCDC3">
    <property type="organism name" value="human"/>
</dbReference>
<dbReference type="GeneWiki" id="CCDC3"/>
<dbReference type="GenomeRNAi" id="83643"/>
<dbReference type="Pharos" id="Q9BQI4">
    <property type="development level" value="Tbio"/>
</dbReference>
<dbReference type="PRO" id="PR:Q9BQI4"/>
<dbReference type="Proteomes" id="UP000005640">
    <property type="component" value="Chromosome 10"/>
</dbReference>
<dbReference type="RNAct" id="Q9BQI4">
    <property type="molecule type" value="protein"/>
</dbReference>
<dbReference type="Bgee" id="ENSG00000151468">
    <property type="expression patterns" value="Expressed in saphenous vein and 171 other cell types or tissues"/>
</dbReference>
<dbReference type="GO" id="GO:0005783">
    <property type="term" value="C:endoplasmic reticulum"/>
    <property type="evidence" value="ECO:0000314"/>
    <property type="project" value="LIFEdb"/>
</dbReference>
<dbReference type="GO" id="GO:0005576">
    <property type="term" value="C:extracellular region"/>
    <property type="evidence" value="ECO:0000314"/>
    <property type="project" value="GO_Central"/>
</dbReference>
<dbReference type="GO" id="GO:0008610">
    <property type="term" value="P:lipid biosynthetic process"/>
    <property type="evidence" value="ECO:0007669"/>
    <property type="project" value="Ensembl"/>
</dbReference>
<dbReference type="GO" id="GO:0010629">
    <property type="term" value="P:negative regulation of gene expression"/>
    <property type="evidence" value="ECO:0000318"/>
    <property type="project" value="GO_Central"/>
</dbReference>
<dbReference type="GO" id="GO:0051055">
    <property type="term" value="P:negative regulation of lipid biosynthetic process"/>
    <property type="evidence" value="ECO:0007669"/>
    <property type="project" value="Ensembl"/>
</dbReference>
<dbReference type="GO" id="GO:0045833">
    <property type="term" value="P:negative regulation of lipid metabolic process"/>
    <property type="evidence" value="ECO:0000314"/>
    <property type="project" value="GO_Central"/>
</dbReference>
<dbReference type="GO" id="GO:0010804">
    <property type="term" value="P:negative regulation of tumor necrosis factor-mediated signaling pathway"/>
    <property type="evidence" value="ECO:0000315"/>
    <property type="project" value="UniProtKB"/>
</dbReference>
<dbReference type="GO" id="GO:0045600">
    <property type="term" value="P:positive regulation of fat cell differentiation"/>
    <property type="evidence" value="ECO:0007669"/>
    <property type="project" value="Ensembl"/>
</dbReference>
<dbReference type="GO" id="GO:0046889">
    <property type="term" value="P:positive regulation of lipid biosynthetic process"/>
    <property type="evidence" value="ECO:0007669"/>
    <property type="project" value="Ensembl"/>
</dbReference>
<dbReference type="GO" id="GO:0007165">
    <property type="term" value="P:signal transduction"/>
    <property type="evidence" value="ECO:0000314"/>
    <property type="project" value="GO_Central"/>
</dbReference>
<dbReference type="InterPro" id="IPR040311">
    <property type="entry name" value="CCDC3"/>
</dbReference>
<dbReference type="PANTHER" id="PTHR31663">
    <property type="entry name" value="COILED-COIL DOMAIN-CONTAINING PROTEIN 3"/>
    <property type="match status" value="1"/>
</dbReference>
<dbReference type="PANTHER" id="PTHR31663:SF4">
    <property type="entry name" value="COILED-COIL DOMAIN-CONTAINING PROTEIN 3"/>
    <property type="match status" value="1"/>
</dbReference>